<proteinExistence type="inferred from homology"/>
<dbReference type="EMBL" id="CP000227">
    <property type="protein sequence ID" value="ACM11806.1"/>
    <property type="molecule type" value="Genomic_DNA"/>
</dbReference>
<dbReference type="SMR" id="B9IUP5"/>
<dbReference type="KEGG" id="bcq:BCQ_1378"/>
<dbReference type="HOGENOM" id="CLU_090664_1_0_9"/>
<dbReference type="Proteomes" id="UP000000441">
    <property type="component" value="Chromosome"/>
</dbReference>
<dbReference type="GO" id="GO:0006089">
    <property type="term" value="P:lactate metabolic process"/>
    <property type="evidence" value="ECO:0007669"/>
    <property type="project" value="UniProtKB-UniRule"/>
</dbReference>
<dbReference type="Gene3D" id="3.40.50.10420">
    <property type="entry name" value="NagB/RpiA/CoA transferase-like"/>
    <property type="match status" value="1"/>
</dbReference>
<dbReference type="HAMAP" id="MF_02104">
    <property type="entry name" value="LutC"/>
    <property type="match status" value="1"/>
</dbReference>
<dbReference type="InterPro" id="IPR024185">
    <property type="entry name" value="FTHF_cligase-like_sf"/>
</dbReference>
<dbReference type="InterPro" id="IPR003741">
    <property type="entry name" value="LUD_dom"/>
</dbReference>
<dbReference type="InterPro" id="IPR022823">
    <property type="entry name" value="LutC"/>
</dbReference>
<dbReference type="InterPro" id="IPR037171">
    <property type="entry name" value="NagB/RpiA_transferase-like"/>
</dbReference>
<dbReference type="PANTHER" id="PTHR43682">
    <property type="entry name" value="LACTATE UTILIZATION PROTEIN C"/>
    <property type="match status" value="1"/>
</dbReference>
<dbReference type="PANTHER" id="PTHR43682:SF1">
    <property type="entry name" value="LACTATE UTILIZATION PROTEIN C"/>
    <property type="match status" value="1"/>
</dbReference>
<dbReference type="Pfam" id="PF02589">
    <property type="entry name" value="LUD_dom"/>
    <property type="match status" value="1"/>
</dbReference>
<dbReference type="SUPFAM" id="SSF100950">
    <property type="entry name" value="NagB/RpiA/CoA transferase-like"/>
    <property type="match status" value="1"/>
</dbReference>
<feature type="chain" id="PRO_0000384000" description="Lactate utilization protein C">
    <location>
        <begin position="1"/>
        <end position="236"/>
    </location>
</feature>
<evidence type="ECO:0000255" key="1">
    <source>
        <dbReference type="HAMAP-Rule" id="MF_02104"/>
    </source>
</evidence>
<sequence length="236" mass="26561">MTGLIQNRESFLENIAKELGRARKTDGVKRPVWKNNVNKETLKNYSQEELLEVFKNQCTNIHTTVVETTNDRLREDIQKVIVENGGGPIMLSADERFDSYGLTSLFKEELPKQNVEVNVWDPEKKEENMRIAERANIGIAFSDYTLAESGTIVVQSHKGQGRSLHFLPTVYLAIIPRETLVPRITQAVEDMNKRVENGETVASCINFITGPSNSADIEMNLVVGVHGPLKAVYFIV</sequence>
<organism>
    <name type="scientific">Bacillus cereus (strain Q1)</name>
    <dbReference type="NCBI Taxonomy" id="361100"/>
    <lineage>
        <taxon>Bacteria</taxon>
        <taxon>Bacillati</taxon>
        <taxon>Bacillota</taxon>
        <taxon>Bacilli</taxon>
        <taxon>Bacillales</taxon>
        <taxon>Bacillaceae</taxon>
        <taxon>Bacillus</taxon>
        <taxon>Bacillus cereus group</taxon>
    </lineage>
</organism>
<name>LUTC_BACCQ</name>
<reference key="1">
    <citation type="journal article" date="2009" name="J. Bacteriol.">
        <title>Complete genome sequence of the extremophilic Bacillus cereus strain Q1 with industrial applications.</title>
        <authorList>
            <person name="Xiong Z."/>
            <person name="Jiang Y."/>
            <person name="Qi D."/>
            <person name="Lu H."/>
            <person name="Yang F."/>
            <person name="Yang J."/>
            <person name="Chen L."/>
            <person name="Sun L."/>
            <person name="Xu X."/>
            <person name="Xue Y."/>
            <person name="Zhu Y."/>
            <person name="Jin Q."/>
        </authorList>
    </citation>
    <scope>NUCLEOTIDE SEQUENCE [LARGE SCALE GENOMIC DNA]</scope>
    <source>
        <strain>Q1</strain>
    </source>
</reference>
<accession>B9IUP5</accession>
<gene>
    <name evidence="1" type="primary">lutC</name>
    <name type="ordered locus">BCQ_1378</name>
</gene>
<protein>
    <recommendedName>
        <fullName evidence="1">Lactate utilization protein C</fullName>
    </recommendedName>
</protein>
<comment type="function">
    <text evidence="1">Is involved in L-lactate degradation and allows cells to grow with lactate as the sole carbon source.</text>
</comment>
<comment type="similarity">
    <text evidence="1">Belongs to the LutC/YkgG family.</text>
</comment>